<reference key="1">
    <citation type="journal article" date="2009" name="BMC Genomics">
        <title>Metabolic analysis of the soil microbe Dechloromonas aromatica str. RCB: indications of a surprisingly complex life-style and cryptic anaerobic pathways for aromatic degradation.</title>
        <authorList>
            <person name="Salinero K.K."/>
            <person name="Keller K."/>
            <person name="Feil W.S."/>
            <person name="Feil H."/>
            <person name="Trong S."/>
            <person name="Di Bartolo G."/>
            <person name="Lapidus A."/>
        </authorList>
    </citation>
    <scope>NUCLEOTIDE SEQUENCE [LARGE SCALE GENOMIC DNA]</scope>
    <source>
        <strain>RCB</strain>
    </source>
</reference>
<name>RIMM_DECAR</name>
<comment type="function">
    <text evidence="1">An accessory protein needed during the final step in the assembly of 30S ribosomal subunit, possibly for assembly of the head region. Essential for efficient processing of 16S rRNA. May be needed both before and after RbfA during the maturation of 16S rRNA. It has affinity for free ribosomal 30S subunits but not for 70S ribosomes.</text>
</comment>
<comment type="subunit">
    <text evidence="1">Binds ribosomal protein uS19.</text>
</comment>
<comment type="subcellular location">
    <subcellularLocation>
        <location evidence="1">Cytoplasm</location>
    </subcellularLocation>
</comment>
<comment type="domain">
    <text evidence="1">The PRC barrel domain binds ribosomal protein uS19.</text>
</comment>
<comment type="similarity">
    <text evidence="1">Belongs to the RimM family.</text>
</comment>
<keyword id="KW-0143">Chaperone</keyword>
<keyword id="KW-0963">Cytoplasm</keyword>
<keyword id="KW-0690">Ribosome biogenesis</keyword>
<keyword id="KW-0698">rRNA processing</keyword>
<evidence type="ECO:0000255" key="1">
    <source>
        <dbReference type="HAMAP-Rule" id="MF_00014"/>
    </source>
</evidence>
<dbReference type="EMBL" id="CP000089">
    <property type="protein sequence ID" value="AAZ47795.1"/>
    <property type="molecule type" value="Genomic_DNA"/>
</dbReference>
<dbReference type="SMR" id="Q47BI6"/>
<dbReference type="STRING" id="159087.Daro_3065"/>
<dbReference type="KEGG" id="dar:Daro_3065"/>
<dbReference type="eggNOG" id="COG0806">
    <property type="taxonomic scope" value="Bacteria"/>
</dbReference>
<dbReference type="HOGENOM" id="CLU_077636_1_0_4"/>
<dbReference type="OrthoDB" id="9783509at2"/>
<dbReference type="GO" id="GO:0005737">
    <property type="term" value="C:cytoplasm"/>
    <property type="evidence" value="ECO:0007669"/>
    <property type="project" value="UniProtKB-SubCell"/>
</dbReference>
<dbReference type="GO" id="GO:0005840">
    <property type="term" value="C:ribosome"/>
    <property type="evidence" value="ECO:0007669"/>
    <property type="project" value="InterPro"/>
</dbReference>
<dbReference type="GO" id="GO:0043022">
    <property type="term" value="F:ribosome binding"/>
    <property type="evidence" value="ECO:0007669"/>
    <property type="project" value="InterPro"/>
</dbReference>
<dbReference type="GO" id="GO:0042274">
    <property type="term" value="P:ribosomal small subunit biogenesis"/>
    <property type="evidence" value="ECO:0007669"/>
    <property type="project" value="UniProtKB-UniRule"/>
</dbReference>
<dbReference type="GO" id="GO:0006364">
    <property type="term" value="P:rRNA processing"/>
    <property type="evidence" value="ECO:0007669"/>
    <property type="project" value="UniProtKB-UniRule"/>
</dbReference>
<dbReference type="Gene3D" id="2.30.30.240">
    <property type="entry name" value="PRC-barrel domain"/>
    <property type="match status" value="1"/>
</dbReference>
<dbReference type="Gene3D" id="2.40.30.60">
    <property type="entry name" value="RimM"/>
    <property type="match status" value="1"/>
</dbReference>
<dbReference type="HAMAP" id="MF_00014">
    <property type="entry name" value="Ribosome_mat_RimM"/>
    <property type="match status" value="1"/>
</dbReference>
<dbReference type="InterPro" id="IPR011033">
    <property type="entry name" value="PRC_barrel-like_sf"/>
</dbReference>
<dbReference type="InterPro" id="IPR056792">
    <property type="entry name" value="PRC_RimM"/>
</dbReference>
<dbReference type="InterPro" id="IPR011961">
    <property type="entry name" value="RimM"/>
</dbReference>
<dbReference type="InterPro" id="IPR002676">
    <property type="entry name" value="RimM_N"/>
</dbReference>
<dbReference type="InterPro" id="IPR036976">
    <property type="entry name" value="RimM_N_sf"/>
</dbReference>
<dbReference type="InterPro" id="IPR009000">
    <property type="entry name" value="Transl_B-barrel_sf"/>
</dbReference>
<dbReference type="NCBIfam" id="TIGR02273">
    <property type="entry name" value="16S_RimM"/>
    <property type="match status" value="1"/>
</dbReference>
<dbReference type="PANTHER" id="PTHR33692">
    <property type="entry name" value="RIBOSOME MATURATION FACTOR RIMM"/>
    <property type="match status" value="1"/>
</dbReference>
<dbReference type="PANTHER" id="PTHR33692:SF1">
    <property type="entry name" value="RIBOSOME MATURATION FACTOR RIMM"/>
    <property type="match status" value="1"/>
</dbReference>
<dbReference type="Pfam" id="PF24986">
    <property type="entry name" value="PRC_RimM"/>
    <property type="match status" value="1"/>
</dbReference>
<dbReference type="Pfam" id="PF01782">
    <property type="entry name" value="RimM"/>
    <property type="match status" value="1"/>
</dbReference>
<dbReference type="SUPFAM" id="SSF50346">
    <property type="entry name" value="PRC-barrel domain"/>
    <property type="match status" value="1"/>
</dbReference>
<dbReference type="SUPFAM" id="SSF50447">
    <property type="entry name" value="Translation proteins"/>
    <property type="match status" value="1"/>
</dbReference>
<organism>
    <name type="scientific">Dechloromonas aromatica (strain RCB)</name>
    <dbReference type="NCBI Taxonomy" id="159087"/>
    <lineage>
        <taxon>Bacteria</taxon>
        <taxon>Pseudomonadati</taxon>
        <taxon>Pseudomonadota</taxon>
        <taxon>Betaproteobacteria</taxon>
        <taxon>Rhodocyclales</taxon>
        <taxon>Azonexaceae</taxon>
        <taxon>Dechloromonas</taxon>
    </lineage>
</organism>
<gene>
    <name evidence="1" type="primary">rimM</name>
    <name type="ordered locus">Daro_3065</name>
</gene>
<protein>
    <recommendedName>
        <fullName evidence="1">Ribosome maturation factor RimM</fullName>
    </recommendedName>
</protein>
<proteinExistence type="inferred from homology"/>
<sequence>MTGNDIVVLGRLADPYGIQGWLWLYPFGDDPLAWAEMPVWWIAREGEPWRECRLKSLKAHGNGVVVLLDGVADRTAAESMKGVLVGAPREALPTTEKNEFYWTDLIGLDVINTADERIGKVVGLIETGANSVLRVMGDDKVERLLPFVSAVVLAVEKEAGQIRVEWGSDW</sequence>
<accession>Q47BI6</accession>
<feature type="chain" id="PRO_0000244123" description="Ribosome maturation factor RimM">
    <location>
        <begin position="1"/>
        <end position="170"/>
    </location>
</feature>
<feature type="domain" description="PRC barrel" evidence="1">
    <location>
        <begin position="97"/>
        <end position="170"/>
    </location>
</feature>